<dbReference type="EC" id="2.7.7.8" evidence="1"/>
<dbReference type="EMBL" id="CU633749">
    <property type="protein sequence ID" value="CAQ68995.1"/>
    <property type="molecule type" value="Genomic_DNA"/>
</dbReference>
<dbReference type="RefSeq" id="WP_012352326.1">
    <property type="nucleotide sequence ID" value="NC_010528.1"/>
</dbReference>
<dbReference type="SMR" id="B3R3W3"/>
<dbReference type="GeneID" id="29761664"/>
<dbReference type="KEGG" id="cti:RALTA_A1030"/>
<dbReference type="eggNOG" id="COG1185">
    <property type="taxonomic scope" value="Bacteria"/>
</dbReference>
<dbReference type="HOGENOM" id="CLU_004217_2_2_4"/>
<dbReference type="BioCyc" id="CTAI977880:RALTA_RS04890-MONOMER"/>
<dbReference type="Proteomes" id="UP000001692">
    <property type="component" value="Chromosome 1"/>
</dbReference>
<dbReference type="GO" id="GO:0005829">
    <property type="term" value="C:cytosol"/>
    <property type="evidence" value="ECO:0007669"/>
    <property type="project" value="TreeGrafter"/>
</dbReference>
<dbReference type="GO" id="GO:0000175">
    <property type="term" value="F:3'-5'-RNA exonuclease activity"/>
    <property type="evidence" value="ECO:0007669"/>
    <property type="project" value="TreeGrafter"/>
</dbReference>
<dbReference type="GO" id="GO:0000287">
    <property type="term" value="F:magnesium ion binding"/>
    <property type="evidence" value="ECO:0007669"/>
    <property type="project" value="UniProtKB-UniRule"/>
</dbReference>
<dbReference type="GO" id="GO:0004654">
    <property type="term" value="F:polyribonucleotide nucleotidyltransferase activity"/>
    <property type="evidence" value="ECO:0007669"/>
    <property type="project" value="UniProtKB-UniRule"/>
</dbReference>
<dbReference type="GO" id="GO:0003723">
    <property type="term" value="F:RNA binding"/>
    <property type="evidence" value="ECO:0007669"/>
    <property type="project" value="UniProtKB-UniRule"/>
</dbReference>
<dbReference type="GO" id="GO:0006402">
    <property type="term" value="P:mRNA catabolic process"/>
    <property type="evidence" value="ECO:0007669"/>
    <property type="project" value="UniProtKB-UniRule"/>
</dbReference>
<dbReference type="GO" id="GO:0006396">
    <property type="term" value="P:RNA processing"/>
    <property type="evidence" value="ECO:0007669"/>
    <property type="project" value="InterPro"/>
</dbReference>
<dbReference type="CDD" id="cd02393">
    <property type="entry name" value="KH-I_PNPase"/>
    <property type="match status" value="1"/>
</dbReference>
<dbReference type="CDD" id="cd11363">
    <property type="entry name" value="RNase_PH_PNPase_1"/>
    <property type="match status" value="1"/>
</dbReference>
<dbReference type="CDD" id="cd11364">
    <property type="entry name" value="RNase_PH_PNPase_2"/>
    <property type="match status" value="1"/>
</dbReference>
<dbReference type="CDD" id="cd04472">
    <property type="entry name" value="S1_PNPase"/>
    <property type="match status" value="1"/>
</dbReference>
<dbReference type="FunFam" id="3.30.1370.10:FF:000001">
    <property type="entry name" value="Polyribonucleotide nucleotidyltransferase"/>
    <property type="match status" value="1"/>
</dbReference>
<dbReference type="FunFam" id="3.30.230.70:FF:000001">
    <property type="entry name" value="Polyribonucleotide nucleotidyltransferase"/>
    <property type="match status" value="1"/>
</dbReference>
<dbReference type="FunFam" id="3.30.230.70:FF:000002">
    <property type="entry name" value="Polyribonucleotide nucleotidyltransferase"/>
    <property type="match status" value="1"/>
</dbReference>
<dbReference type="FunFam" id="2.40.50.140:FF:000189">
    <property type="entry name" value="Polyribonucleotide nucleotidyltransferase, putative"/>
    <property type="match status" value="1"/>
</dbReference>
<dbReference type="Gene3D" id="3.30.230.70">
    <property type="entry name" value="GHMP Kinase, N-terminal domain"/>
    <property type="match status" value="2"/>
</dbReference>
<dbReference type="Gene3D" id="3.30.1370.10">
    <property type="entry name" value="K Homology domain, type 1"/>
    <property type="match status" value="1"/>
</dbReference>
<dbReference type="Gene3D" id="2.40.50.140">
    <property type="entry name" value="Nucleic acid-binding proteins"/>
    <property type="match status" value="1"/>
</dbReference>
<dbReference type="HAMAP" id="MF_01595">
    <property type="entry name" value="PNPase"/>
    <property type="match status" value="1"/>
</dbReference>
<dbReference type="InterPro" id="IPR001247">
    <property type="entry name" value="ExoRNase_PH_dom1"/>
</dbReference>
<dbReference type="InterPro" id="IPR015847">
    <property type="entry name" value="ExoRNase_PH_dom2"/>
</dbReference>
<dbReference type="InterPro" id="IPR036345">
    <property type="entry name" value="ExoRNase_PH_dom2_sf"/>
</dbReference>
<dbReference type="InterPro" id="IPR004087">
    <property type="entry name" value="KH_dom"/>
</dbReference>
<dbReference type="InterPro" id="IPR004088">
    <property type="entry name" value="KH_dom_type_1"/>
</dbReference>
<dbReference type="InterPro" id="IPR036612">
    <property type="entry name" value="KH_dom_type_1_sf"/>
</dbReference>
<dbReference type="InterPro" id="IPR012340">
    <property type="entry name" value="NA-bd_OB-fold"/>
</dbReference>
<dbReference type="InterPro" id="IPR012162">
    <property type="entry name" value="PNPase"/>
</dbReference>
<dbReference type="InterPro" id="IPR027408">
    <property type="entry name" value="PNPase/RNase_PH_dom_sf"/>
</dbReference>
<dbReference type="InterPro" id="IPR015848">
    <property type="entry name" value="PNPase_PH_RNA-bd_bac/org-type"/>
</dbReference>
<dbReference type="InterPro" id="IPR036456">
    <property type="entry name" value="PNPase_PH_RNA-bd_sf"/>
</dbReference>
<dbReference type="InterPro" id="IPR020568">
    <property type="entry name" value="Ribosomal_Su5_D2-typ_SF"/>
</dbReference>
<dbReference type="InterPro" id="IPR003029">
    <property type="entry name" value="S1_domain"/>
</dbReference>
<dbReference type="NCBIfam" id="TIGR03591">
    <property type="entry name" value="polynuc_phos"/>
    <property type="match status" value="1"/>
</dbReference>
<dbReference type="NCBIfam" id="NF008805">
    <property type="entry name" value="PRK11824.1"/>
    <property type="match status" value="1"/>
</dbReference>
<dbReference type="PANTHER" id="PTHR11252">
    <property type="entry name" value="POLYRIBONUCLEOTIDE NUCLEOTIDYLTRANSFERASE"/>
    <property type="match status" value="1"/>
</dbReference>
<dbReference type="PANTHER" id="PTHR11252:SF0">
    <property type="entry name" value="POLYRIBONUCLEOTIDE NUCLEOTIDYLTRANSFERASE 1, MITOCHONDRIAL"/>
    <property type="match status" value="1"/>
</dbReference>
<dbReference type="Pfam" id="PF00013">
    <property type="entry name" value="KH_1"/>
    <property type="match status" value="1"/>
</dbReference>
<dbReference type="Pfam" id="PF03726">
    <property type="entry name" value="PNPase"/>
    <property type="match status" value="1"/>
</dbReference>
<dbReference type="Pfam" id="PF01138">
    <property type="entry name" value="RNase_PH"/>
    <property type="match status" value="2"/>
</dbReference>
<dbReference type="Pfam" id="PF03725">
    <property type="entry name" value="RNase_PH_C"/>
    <property type="match status" value="2"/>
</dbReference>
<dbReference type="Pfam" id="PF00575">
    <property type="entry name" value="S1"/>
    <property type="match status" value="1"/>
</dbReference>
<dbReference type="PIRSF" id="PIRSF005499">
    <property type="entry name" value="PNPase"/>
    <property type="match status" value="1"/>
</dbReference>
<dbReference type="SMART" id="SM00322">
    <property type="entry name" value="KH"/>
    <property type="match status" value="1"/>
</dbReference>
<dbReference type="SMART" id="SM00316">
    <property type="entry name" value="S1"/>
    <property type="match status" value="1"/>
</dbReference>
<dbReference type="SUPFAM" id="SSF54791">
    <property type="entry name" value="Eukaryotic type KH-domain (KH-domain type I)"/>
    <property type="match status" value="1"/>
</dbReference>
<dbReference type="SUPFAM" id="SSF50249">
    <property type="entry name" value="Nucleic acid-binding proteins"/>
    <property type="match status" value="1"/>
</dbReference>
<dbReference type="SUPFAM" id="SSF46915">
    <property type="entry name" value="Polynucleotide phosphorylase/guanosine pentaphosphate synthase (PNPase/GPSI), domain 3"/>
    <property type="match status" value="1"/>
</dbReference>
<dbReference type="SUPFAM" id="SSF55666">
    <property type="entry name" value="Ribonuclease PH domain 2-like"/>
    <property type="match status" value="2"/>
</dbReference>
<dbReference type="SUPFAM" id="SSF54211">
    <property type="entry name" value="Ribosomal protein S5 domain 2-like"/>
    <property type="match status" value="2"/>
</dbReference>
<dbReference type="PROSITE" id="PS50084">
    <property type="entry name" value="KH_TYPE_1"/>
    <property type="match status" value="1"/>
</dbReference>
<dbReference type="PROSITE" id="PS50126">
    <property type="entry name" value="S1"/>
    <property type="match status" value="1"/>
</dbReference>
<organism>
    <name type="scientific">Cupriavidus taiwanensis (strain DSM 17343 / BCRC 17206 / CCUG 44338 / CIP 107171 / LMG 19424 / R1)</name>
    <name type="common">Ralstonia taiwanensis (strain LMG 19424)</name>
    <dbReference type="NCBI Taxonomy" id="977880"/>
    <lineage>
        <taxon>Bacteria</taxon>
        <taxon>Pseudomonadati</taxon>
        <taxon>Pseudomonadota</taxon>
        <taxon>Betaproteobacteria</taxon>
        <taxon>Burkholderiales</taxon>
        <taxon>Burkholderiaceae</taxon>
        <taxon>Cupriavidus</taxon>
    </lineage>
</organism>
<name>PNP_CUPTR</name>
<keyword id="KW-0963">Cytoplasm</keyword>
<keyword id="KW-0460">Magnesium</keyword>
<keyword id="KW-0479">Metal-binding</keyword>
<keyword id="KW-0548">Nucleotidyltransferase</keyword>
<keyword id="KW-0694">RNA-binding</keyword>
<keyword id="KW-0808">Transferase</keyword>
<sequence length="723" mass="77627">MSMFNKVVKEFQWGQHKVRMETGEIARQAGGAVLVDVEDTVVLATVVAAKSPKPGQDFFPLTVDYIEKTYAAGKIPGGFFKREGRPSENETLTSRLIDRPLRPLFPEGFYNDVQVVVHVVSLNPEVPADIPALIGASAALAVSGIPFNGPVGAARVGYKDGQYLLNPTRSQIATSDLDLVVAGTERAVLMVESEANQLSEDVMLGAVVYGHEQMQTAINAIHELVREGGKPEWDWAPAAKNEPLIAKVTEVALPLLQEAYQLRQKSARSQKLKEVSANVAAALAEAGVEADKVEVGNIMFDLEAKIVRGQILNGEPRIDGRDTRTVRPIEIRSSVLPRAHGSALFTRGETQALVVATLGTKSDEQIIDALAGEYRDRFMLHYNMPPFATGETGRVGSPKRREIGHGRLAKRALIPVLPKEDEFAYTIRLVSEITESNGSSSMASVCGGCLALMDAGVPVKAHVAGVAMGLILEGNKFAVLTDILGDEDHLGDMDFKVAGTDNGITALQMDIKVQGITKEIMQVALAQAKEGRLHILSNMQEAMGHARTELSAHAPRMITMKIHPDKIREVIGKGGSTIQALTKETGTTIDIQEDGTITIASTSTEGMAEAKRRIEGITAEAEVGKIYAGTVLKLLDFGAIVNILPGKDGLLHISEIVNERVKDIKDWLKEGQQVRVKLIQADEKGRLRLSLKAALAEEGGSISPINAGESAAPAAPAGGSEQQ</sequence>
<gene>
    <name evidence="1" type="primary">pnp</name>
    <name type="ordered locus">RALTA_A1030</name>
</gene>
<comment type="function">
    <text evidence="1">Involved in mRNA degradation. Catalyzes the phosphorolysis of single-stranded polyribonucleotides processively in the 3'- to 5'-direction.</text>
</comment>
<comment type="catalytic activity">
    <reaction evidence="1">
        <text>RNA(n+1) + phosphate = RNA(n) + a ribonucleoside 5'-diphosphate</text>
        <dbReference type="Rhea" id="RHEA:22096"/>
        <dbReference type="Rhea" id="RHEA-COMP:14527"/>
        <dbReference type="Rhea" id="RHEA-COMP:17342"/>
        <dbReference type="ChEBI" id="CHEBI:43474"/>
        <dbReference type="ChEBI" id="CHEBI:57930"/>
        <dbReference type="ChEBI" id="CHEBI:140395"/>
        <dbReference type="EC" id="2.7.7.8"/>
    </reaction>
</comment>
<comment type="cofactor">
    <cofactor evidence="1">
        <name>Mg(2+)</name>
        <dbReference type="ChEBI" id="CHEBI:18420"/>
    </cofactor>
</comment>
<comment type="subcellular location">
    <subcellularLocation>
        <location evidence="1">Cytoplasm</location>
    </subcellularLocation>
</comment>
<comment type="similarity">
    <text evidence="1">Belongs to the polyribonucleotide nucleotidyltransferase family.</text>
</comment>
<proteinExistence type="inferred from homology"/>
<feature type="chain" id="PRO_1000147911" description="Polyribonucleotide nucleotidyltransferase">
    <location>
        <begin position="1"/>
        <end position="723"/>
    </location>
</feature>
<feature type="domain" description="KH" evidence="1">
    <location>
        <begin position="555"/>
        <end position="614"/>
    </location>
</feature>
<feature type="domain" description="S1 motif" evidence="1">
    <location>
        <begin position="624"/>
        <end position="692"/>
    </location>
</feature>
<feature type="region of interest" description="Disordered" evidence="2">
    <location>
        <begin position="701"/>
        <end position="723"/>
    </location>
</feature>
<feature type="compositionally biased region" description="Low complexity" evidence="2">
    <location>
        <begin position="707"/>
        <end position="723"/>
    </location>
</feature>
<feature type="binding site" evidence="1">
    <location>
        <position position="488"/>
    </location>
    <ligand>
        <name>Mg(2+)</name>
        <dbReference type="ChEBI" id="CHEBI:18420"/>
    </ligand>
</feature>
<feature type="binding site" evidence="1">
    <location>
        <position position="494"/>
    </location>
    <ligand>
        <name>Mg(2+)</name>
        <dbReference type="ChEBI" id="CHEBI:18420"/>
    </ligand>
</feature>
<protein>
    <recommendedName>
        <fullName evidence="1">Polyribonucleotide nucleotidyltransferase</fullName>
        <ecNumber evidence="1">2.7.7.8</ecNumber>
    </recommendedName>
    <alternativeName>
        <fullName evidence="1">Polynucleotide phosphorylase</fullName>
        <shortName evidence="1">PNPase</shortName>
    </alternativeName>
</protein>
<reference key="1">
    <citation type="journal article" date="2008" name="Genome Res.">
        <title>Genome sequence of the beta-rhizobium Cupriavidus taiwanensis and comparative genomics of rhizobia.</title>
        <authorList>
            <person name="Amadou C."/>
            <person name="Pascal G."/>
            <person name="Mangenot S."/>
            <person name="Glew M."/>
            <person name="Bontemps C."/>
            <person name="Capela D."/>
            <person name="Carrere S."/>
            <person name="Cruveiller S."/>
            <person name="Dossat C."/>
            <person name="Lajus A."/>
            <person name="Marchetti M."/>
            <person name="Poinsot V."/>
            <person name="Rouy Z."/>
            <person name="Servin B."/>
            <person name="Saad M."/>
            <person name="Schenowitz C."/>
            <person name="Barbe V."/>
            <person name="Batut J."/>
            <person name="Medigue C."/>
            <person name="Masson-Boivin C."/>
        </authorList>
    </citation>
    <scope>NUCLEOTIDE SEQUENCE [LARGE SCALE GENOMIC DNA]</scope>
    <source>
        <strain>DSM 17343 / BCRC 17206 / CCUG 44338 / CIP 107171 / LMG 19424 / R1</strain>
    </source>
</reference>
<evidence type="ECO:0000255" key="1">
    <source>
        <dbReference type="HAMAP-Rule" id="MF_01595"/>
    </source>
</evidence>
<evidence type="ECO:0000256" key="2">
    <source>
        <dbReference type="SAM" id="MobiDB-lite"/>
    </source>
</evidence>
<accession>B3R3W3</accession>